<name>HOT_CAEEL</name>
<feature type="transit peptide" description="Mitochondrion" evidence="3">
    <location>
        <begin position="1"/>
        <end status="unknown"/>
    </location>
</feature>
<feature type="chain" id="PRO_0000324756" description="Hydroxyacid-oxoacid transhydrogenase, mitochondrial">
    <location>
        <begin status="unknown"/>
        <end position="465"/>
    </location>
</feature>
<protein>
    <recommendedName>
        <fullName evidence="1">Hydroxyacid-oxoacid transhydrogenase, mitochondrial</fullName>
        <shortName>HOT</shortName>
        <ecNumber evidence="1">1.1.99.24</ecNumber>
    </recommendedName>
    <alternativeName>
        <fullName evidence="5">3-Hydroxypropionate-oxoacid transhydrogenase</fullName>
    </alternativeName>
</protein>
<evidence type="ECO:0000250" key="1">
    <source>
        <dbReference type="UniProtKB" id="Q8IWW8"/>
    </source>
</evidence>
<evidence type="ECO:0000250" key="2">
    <source>
        <dbReference type="UniProtKB" id="Q8R0N6"/>
    </source>
</evidence>
<evidence type="ECO:0000255" key="3"/>
<evidence type="ECO:0000305" key="4"/>
<evidence type="ECO:0000312" key="5">
    <source>
        <dbReference type="WormBase" id="Y38F1A.6"/>
    </source>
</evidence>
<proteinExistence type="inferred from homology"/>
<organism>
    <name type="scientific">Caenorhabditis elegans</name>
    <dbReference type="NCBI Taxonomy" id="6239"/>
    <lineage>
        <taxon>Eukaryota</taxon>
        <taxon>Metazoa</taxon>
        <taxon>Ecdysozoa</taxon>
        <taxon>Nematoda</taxon>
        <taxon>Chromadorea</taxon>
        <taxon>Rhabditida</taxon>
        <taxon>Rhabditina</taxon>
        <taxon>Rhabditomorpha</taxon>
        <taxon>Rhabditoidea</taxon>
        <taxon>Rhabditidae</taxon>
        <taxon>Peloderinae</taxon>
        <taxon>Caenorhabditis</taxon>
    </lineage>
</organism>
<comment type="function">
    <text evidence="1">Catalyzes the cofactor-independent reversible oxidation of gamma-hydroxybutyrate (GHB) to succinic semialdehyde (SSA) coupled to reduction of 2-ketoglutarate (2-KG) to D-2-hydroxyglutarate (D-2-HG). L-3-hydroxybutyrate (L-3-OHB) is also a substrate for HOT when using 2-KG as hydrogen acceptor, resulting in the formation of D-2-HG.</text>
</comment>
<comment type="catalytic activity">
    <reaction evidence="1">
        <text>(S)-3-hydroxybutanoate + 2-oxoglutarate = (R)-2-hydroxyglutarate + acetoacetate</text>
        <dbReference type="Rhea" id="RHEA:23048"/>
        <dbReference type="ChEBI" id="CHEBI:11047"/>
        <dbReference type="ChEBI" id="CHEBI:13705"/>
        <dbReference type="ChEBI" id="CHEBI:15801"/>
        <dbReference type="ChEBI" id="CHEBI:16810"/>
        <dbReference type="EC" id="1.1.99.24"/>
    </reaction>
</comment>
<comment type="catalytic activity">
    <reaction evidence="1">
        <text>4-hydroxybutanoate + 2-oxoglutarate = (R)-2-hydroxyglutarate + succinate semialdehyde</text>
        <dbReference type="Rhea" id="RHEA:24734"/>
        <dbReference type="ChEBI" id="CHEBI:15801"/>
        <dbReference type="ChEBI" id="CHEBI:16724"/>
        <dbReference type="ChEBI" id="CHEBI:16810"/>
        <dbReference type="ChEBI" id="CHEBI:57706"/>
        <dbReference type="EC" id="1.1.99.24"/>
    </reaction>
</comment>
<comment type="subcellular location">
    <subcellularLocation>
        <location evidence="2">Mitochondrion</location>
    </subcellularLocation>
</comment>
<comment type="similarity">
    <text evidence="4">Belongs to the iron-containing alcohol dehydrogenase family. Hydroxyacid-oxoacid transhydrogenase subfamily.</text>
</comment>
<accession>Q9U2M4</accession>
<sequence length="465" mass="50506">MSASLARGILSKMGGSCCPHHAPATNPFKLAKLHGNNKSTDYAFEMVCSTLRFGKGVTLEIGYDVRNLGAKKTLLITDKNVQNTIAFKNAEQALKMVNIEYEVFDDVLIEPTVNSMQKAIAFAKSKQFDSFIAVGGGSVIDTTKAAALYASNPEADFLDFVGPPFGKSMQPKNPMLPLIAVPTTAGTGSETTAAAIMDLPEHKCKTGIRLRCIKPYLAVVDPLNVMSMPRNVAIYSGFDVLCHALESFTALPFDQRSPRPENPGVRPLYQGSNPISDVWSKEALRIIGKYFRRSIFDPTDEEARTEMLKASSFAGIGFGNAGVHLCHGLSYPISSQAKSCVADDYPKEKNLIPHGLSVMTTAVADFEFTTAACPDRHLISAQTLGADIPNNASNEYISRTLCDRLRGYMRDFGVPNGLKGMGFEFSDIEMLTEAASHSVPNIAISPKSADREIISTLYEKSLTVY</sequence>
<keyword id="KW-0496">Mitochondrion</keyword>
<keyword id="KW-0560">Oxidoreductase</keyword>
<keyword id="KW-1185">Reference proteome</keyword>
<keyword id="KW-0809">Transit peptide</keyword>
<dbReference type="EC" id="1.1.99.24" evidence="1"/>
<dbReference type="EMBL" id="AL032639">
    <property type="protein sequence ID" value="CAA21631.2"/>
    <property type="molecule type" value="Genomic_DNA"/>
</dbReference>
<dbReference type="PIR" id="E88343">
    <property type="entry name" value="E88343"/>
</dbReference>
<dbReference type="PIR" id="T26686">
    <property type="entry name" value="T26686"/>
</dbReference>
<dbReference type="RefSeq" id="NP_496764.1">
    <property type="nucleotide sequence ID" value="NM_064363.8"/>
</dbReference>
<dbReference type="SMR" id="Q9U2M4"/>
<dbReference type="BioGRID" id="40240">
    <property type="interactions" value="45"/>
</dbReference>
<dbReference type="DIP" id="DIP-24327N"/>
<dbReference type="FunCoup" id="Q9U2M4">
    <property type="interactions" value="610"/>
</dbReference>
<dbReference type="STRING" id="6239.Y38F1A.6.1"/>
<dbReference type="PaxDb" id="6239-Y38F1A.6.1"/>
<dbReference type="PeptideAtlas" id="Q9U2M4"/>
<dbReference type="EnsemblMetazoa" id="Y38F1A.6.1">
    <property type="protein sequence ID" value="Y38F1A.6.1"/>
    <property type="gene ID" value="WBGene00012608"/>
</dbReference>
<dbReference type="EnsemblMetazoa" id="Y38F1A.6.2">
    <property type="protein sequence ID" value="Y38F1A.6.2"/>
    <property type="gene ID" value="WBGene00012608"/>
</dbReference>
<dbReference type="EnsemblMetazoa" id="Y38F1A.6.3">
    <property type="protein sequence ID" value="Y38F1A.6.3"/>
    <property type="gene ID" value="WBGene00012608"/>
</dbReference>
<dbReference type="EnsemblMetazoa" id="Y38F1A.6.4">
    <property type="protein sequence ID" value="Y38F1A.6.4"/>
    <property type="gene ID" value="WBGene00012608"/>
</dbReference>
<dbReference type="EnsemblMetazoa" id="Y38F1A.6.5">
    <property type="protein sequence ID" value="Y38F1A.6.5"/>
    <property type="gene ID" value="WBGene00012608"/>
</dbReference>
<dbReference type="EnsemblMetazoa" id="Y38F1A.6.6">
    <property type="protein sequence ID" value="Y38F1A.6.6"/>
    <property type="gene ID" value="WBGene00012608"/>
</dbReference>
<dbReference type="EnsemblMetazoa" id="Y38F1A.6.7">
    <property type="protein sequence ID" value="Y38F1A.6.7"/>
    <property type="gene ID" value="WBGene00012608"/>
</dbReference>
<dbReference type="GeneID" id="174942"/>
<dbReference type="KEGG" id="cel:CELE_Y38F1A.6"/>
<dbReference type="UCSC" id="Y38F1A.6.1">
    <property type="organism name" value="c. elegans"/>
</dbReference>
<dbReference type="AGR" id="WB:WBGene00012608"/>
<dbReference type="CTD" id="174942"/>
<dbReference type="WormBase" id="Y38F1A.6">
    <property type="protein sequence ID" value="CE24222"/>
    <property type="gene ID" value="WBGene00012608"/>
    <property type="gene designation" value="hphd-1"/>
</dbReference>
<dbReference type="eggNOG" id="KOG3857">
    <property type="taxonomic scope" value="Eukaryota"/>
</dbReference>
<dbReference type="GeneTree" id="ENSGT00390000003849"/>
<dbReference type="HOGENOM" id="CLU_007207_0_7_1"/>
<dbReference type="InParanoid" id="Q9U2M4"/>
<dbReference type="OMA" id="NLMGAGC"/>
<dbReference type="OrthoDB" id="339764at2759"/>
<dbReference type="PhylomeDB" id="Q9U2M4"/>
<dbReference type="Reactome" id="R-CEL-880009">
    <property type="pathway name" value="Interconversion of 2-oxoglutarate and 2-hydroxyglutarate"/>
</dbReference>
<dbReference type="PRO" id="PR:Q9U2M4"/>
<dbReference type="Proteomes" id="UP000001940">
    <property type="component" value="Chromosome II"/>
</dbReference>
<dbReference type="Bgee" id="WBGene00012608">
    <property type="expression patterns" value="Expressed in adult organism and 4 other cell types or tissues"/>
</dbReference>
<dbReference type="GO" id="GO:0005739">
    <property type="term" value="C:mitochondrion"/>
    <property type="evidence" value="ECO:0000250"/>
    <property type="project" value="UniProtKB"/>
</dbReference>
<dbReference type="GO" id="GO:0004022">
    <property type="term" value="F:alcohol dehydrogenase (NAD+) activity"/>
    <property type="evidence" value="ECO:0000318"/>
    <property type="project" value="GO_Central"/>
</dbReference>
<dbReference type="GO" id="GO:0047988">
    <property type="term" value="F:hydroxyacid-oxoacid transhydrogenase activity"/>
    <property type="evidence" value="ECO:0000250"/>
    <property type="project" value="UniProtKB"/>
</dbReference>
<dbReference type="GO" id="GO:0046872">
    <property type="term" value="F:metal ion binding"/>
    <property type="evidence" value="ECO:0007669"/>
    <property type="project" value="InterPro"/>
</dbReference>
<dbReference type="GO" id="GO:0019552">
    <property type="term" value="P:glutamate catabolic process via 2-hydroxyglutarate"/>
    <property type="evidence" value="ECO:0000250"/>
    <property type="project" value="UniProtKB"/>
</dbReference>
<dbReference type="CDD" id="cd08190">
    <property type="entry name" value="HOT"/>
    <property type="match status" value="1"/>
</dbReference>
<dbReference type="FunFam" id="3.40.50.1970:FF:000024">
    <property type="entry name" value="Hydroxyacid-oxoacid transhydrogenase, mitochondrial"/>
    <property type="match status" value="1"/>
</dbReference>
<dbReference type="FunFam" id="1.20.1090.10:FF:000003">
    <property type="entry name" value="Probable hydroxyacid-oxoacid transhydrogenase, mitochondrial"/>
    <property type="match status" value="1"/>
</dbReference>
<dbReference type="Gene3D" id="3.40.50.1970">
    <property type="match status" value="1"/>
</dbReference>
<dbReference type="Gene3D" id="1.20.1090.10">
    <property type="entry name" value="Dehydroquinate synthase-like - alpha domain"/>
    <property type="match status" value="1"/>
</dbReference>
<dbReference type="InterPro" id="IPR001670">
    <property type="entry name" value="ADH_Fe/GldA"/>
</dbReference>
<dbReference type="InterPro" id="IPR056798">
    <property type="entry name" value="ADH_Fe_C"/>
</dbReference>
<dbReference type="InterPro" id="IPR018211">
    <property type="entry name" value="ADH_Fe_CS"/>
</dbReference>
<dbReference type="InterPro" id="IPR039697">
    <property type="entry name" value="Alcohol_dehydrogenase_Fe"/>
</dbReference>
<dbReference type="InterPro" id="IPR042157">
    <property type="entry name" value="HOT"/>
</dbReference>
<dbReference type="PANTHER" id="PTHR11496">
    <property type="entry name" value="ALCOHOL DEHYDROGENASE"/>
    <property type="match status" value="1"/>
</dbReference>
<dbReference type="PANTHER" id="PTHR11496:SF83">
    <property type="entry name" value="HYDROXYACID-OXOACID TRANSHYDROGENASE, MITOCHONDRIAL"/>
    <property type="match status" value="1"/>
</dbReference>
<dbReference type="Pfam" id="PF25137">
    <property type="entry name" value="ADH_Fe_C"/>
    <property type="match status" value="1"/>
</dbReference>
<dbReference type="Pfam" id="PF00465">
    <property type="entry name" value="Fe-ADH"/>
    <property type="match status" value="1"/>
</dbReference>
<dbReference type="SUPFAM" id="SSF56796">
    <property type="entry name" value="Dehydroquinate synthase-like"/>
    <property type="match status" value="1"/>
</dbReference>
<dbReference type="PROSITE" id="PS00913">
    <property type="entry name" value="ADH_IRON_1"/>
    <property type="match status" value="1"/>
</dbReference>
<gene>
    <name evidence="5" type="primary">hphd-1</name>
    <name evidence="5" type="ORF">Y38F1A.6</name>
</gene>
<reference key="1">
    <citation type="journal article" date="1998" name="Science">
        <title>Genome sequence of the nematode C. elegans: a platform for investigating biology.</title>
        <authorList>
            <consortium name="The C. elegans sequencing consortium"/>
        </authorList>
    </citation>
    <scope>NUCLEOTIDE SEQUENCE [LARGE SCALE GENOMIC DNA]</scope>
    <source>
        <strain>Bristol N2</strain>
    </source>
</reference>